<reference key="1">
    <citation type="journal article" date="1999" name="DNA Res.">
        <title>Structural analysis of Arabidopsis thaliana chromosome 5. IX. Sequence features of the regions of 1,011,550 bp covered by seventeen P1 and TAC clones.</title>
        <authorList>
            <person name="Kaneko T."/>
            <person name="Katoh T."/>
            <person name="Sato S."/>
            <person name="Nakamura Y."/>
            <person name="Asamizu E."/>
            <person name="Kotani H."/>
            <person name="Miyajima N."/>
            <person name="Tabata S."/>
        </authorList>
    </citation>
    <scope>NUCLEOTIDE SEQUENCE [LARGE SCALE GENOMIC DNA]</scope>
    <source>
        <strain>cv. Columbia</strain>
    </source>
</reference>
<reference key="2">
    <citation type="journal article" date="2017" name="Plant J.">
        <title>Araport11: a complete reannotation of the Arabidopsis thaliana reference genome.</title>
        <authorList>
            <person name="Cheng C.Y."/>
            <person name="Krishnakumar V."/>
            <person name="Chan A.P."/>
            <person name="Thibaud-Nissen F."/>
            <person name="Schobel S."/>
            <person name="Town C.D."/>
        </authorList>
    </citation>
    <scope>GENOME REANNOTATION</scope>
    <source>
        <strain>cv. Columbia</strain>
    </source>
</reference>
<reference key="3">
    <citation type="submission" date="2009-03" db="EMBL/GenBank/DDBJ databases">
        <title>ORF cloning and analysis of Arabidopsis transcription factor genes.</title>
        <authorList>
            <person name="Fujita M."/>
            <person name="Mizukado S."/>
            <person name="Seki M."/>
            <person name="Shinozaki K."/>
            <person name="Mitsuda N."/>
            <person name="Takiguchi Y."/>
            <person name="Takagi M."/>
        </authorList>
    </citation>
    <scope>NUCLEOTIDE SEQUENCE [LARGE SCALE MRNA]</scope>
</reference>
<reference key="4">
    <citation type="journal article" date="2008" name="Trends Plant Sci.">
        <title>The plant B3 superfamily.</title>
        <authorList>
            <person name="Swaminathan K."/>
            <person name="Peterson K."/>
            <person name="Jack T."/>
        </authorList>
    </citation>
    <scope>GENE FAMILY</scope>
</reference>
<comment type="subcellular location">
    <subcellularLocation>
        <location evidence="1">Nucleus</location>
    </subcellularLocation>
</comment>
<dbReference type="EMBL" id="AB018118">
    <property type="protein sequence ID" value="BAB09590.1"/>
    <property type="molecule type" value="Genomic_DNA"/>
</dbReference>
<dbReference type="EMBL" id="CP002688">
    <property type="protein sequence ID" value="AED96942.1"/>
    <property type="molecule type" value="Genomic_DNA"/>
</dbReference>
<dbReference type="EMBL" id="AB493797">
    <property type="protein sequence ID" value="BAH30635.1"/>
    <property type="molecule type" value="mRNA"/>
</dbReference>
<dbReference type="RefSeq" id="NP_200580.1">
    <property type="nucleotide sequence ID" value="NM_125155.3"/>
</dbReference>
<dbReference type="SMR" id="Q9FHH1"/>
<dbReference type="FunCoup" id="Q9FHH1">
    <property type="interactions" value="1"/>
</dbReference>
<dbReference type="STRING" id="3702.Q9FHH1"/>
<dbReference type="PaxDb" id="3702-AT5G57720.1"/>
<dbReference type="EnsemblPlants" id="AT5G57720.1">
    <property type="protein sequence ID" value="AT5G57720.1"/>
    <property type="gene ID" value="AT5G57720"/>
</dbReference>
<dbReference type="GeneID" id="835879"/>
<dbReference type="Gramene" id="AT5G57720.1">
    <property type="protein sequence ID" value="AT5G57720.1"/>
    <property type="gene ID" value="AT5G57720"/>
</dbReference>
<dbReference type="KEGG" id="ath:AT5G57720"/>
<dbReference type="Araport" id="AT5G57720"/>
<dbReference type="TAIR" id="AT5G57720"/>
<dbReference type="eggNOG" id="ENOG502S4ID">
    <property type="taxonomic scope" value="Eukaryota"/>
</dbReference>
<dbReference type="HOGENOM" id="CLU_048511_2_0_1"/>
<dbReference type="InParanoid" id="Q9FHH1"/>
<dbReference type="OMA" id="WNVKWTI"/>
<dbReference type="OrthoDB" id="590488at2759"/>
<dbReference type="PhylomeDB" id="Q9FHH1"/>
<dbReference type="PRO" id="PR:Q9FHH1"/>
<dbReference type="Proteomes" id="UP000006548">
    <property type="component" value="Chromosome 5"/>
</dbReference>
<dbReference type="ExpressionAtlas" id="Q9FHH1">
    <property type="expression patterns" value="baseline and differential"/>
</dbReference>
<dbReference type="GO" id="GO:0005634">
    <property type="term" value="C:nucleus"/>
    <property type="evidence" value="ECO:0007669"/>
    <property type="project" value="UniProtKB-SubCell"/>
</dbReference>
<dbReference type="GO" id="GO:0003677">
    <property type="term" value="F:DNA binding"/>
    <property type="evidence" value="ECO:0007669"/>
    <property type="project" value="UniProtKB-KW"/>
</dbReference>
<dbReference type="CDD" id="cd10017">
    <property type="entry name" value="B3_DNA"/>
    <property type="match status" value="1"/>
</dbReference>
<dbReference type="Gene3D" id="2.40.330.10">
    <property type="entry name" value="DNA-binding pseudobarrel domain"/>
    <property type="match status" value="2"/>
</dbReference>
<dbReference type="InterPro" id="IPR003340">
    <property type="entry name" value="B3_DNA-bd"/>
</dbReference>
<dbReference type="InterPro" id="IPR015300">
    <property type="entry name" value="DNA-bd_pseudobarrel_sf"/>
</dbReference>
<dbReference type="InterPro" id="IPR050655">
    <property type="entry name" value="Plant_B3_domain"/>
</dbReference>
<dbReference type="PANTHER" id="PTHR31920">
    <property type="entry name" value="B3 DOMAIN-CONTAINING"/>
    <property type="match status" value="1"/>
</dbReference>
<dbReference type="PANTHER" id="PTHR31920:SF47">
    <property type="entry name" value="GENOME ASSEMBLY, CHROMOSOME: A02"/>
    <property type="match status" value="1"/>
</dbReference>
<dbReference type="Pfam" id="PF02362">
    <property type="entry name" value="B3"/>
    <property type="match status" value="1"/>
</dbReference>
<dbReference type="SMART" id="SM01019">
    <property type="entry name" value="B3"/>
    <property type="match status" value="2"/>
</dbReference>
<dbReference type="SUPFAM" id="SSF101936">
    <property type="entry name" value="DNA-binding pseudobarrel domain"/>
    <property type="match status" value="2"/>
</dbReference>
<dbReference type="PROSITE" id="PS50863">
    <property type="entry name" value="B3"/>
    <property type="match status" value="1"/>
</dbReference>
<protein>
    <recommendedName>
        <fullName>B3 domain-containing protein At5g57720</fullName>
    </recommendedName>
</protein>
<accession>Q9FHH1</accession>
<keyword id="KW-0238">DNA-binding</keyword>
<keyword id="KW-0539">Nucleus</keyword>
<keyword id="KW-1185">Reference proteome</keyword>
<keyword id="KW-0804">Transcription</keyword>
<keyword id="KW-0805">Transcription regulation</keyword>
<organism>
    <name type="scientific">Arabidopsis thaliana</name>
    <name type="common">Mouse-ear cress</name>
    <dbReference type="NCBI Taxonomy" id="3702"/>
    <lineage>
        <taxon>Eukaryota</taxon>
        <taxon>Viridiplantae</taxon>
        <taxon>Streptophyta</taxon>
        <taxon>Embryophyta</taxon>
        <taxon>Tracheophyta</taxon>
        <taxon>Spermatophyta</taxon>
        <taxon>Magnoliopsida</taxon>
        <taxon>eudicotyledons</taxon>
        <taxon>Gunneridae</taxon>
        <taxon>Pentapetalae</taxon>
        <taxon>rosids</taxon>
        <taxon>malvids</taxon>
        <taxon>Brassicales</taxon>
        <taxon>Brassicaceae</taxon>
        <taxon>Camelineae</taxon>
        <taxon>Arabidopsis</taxon>
    </lineage>
</organism>
<sequence length="300" mass="34399">MVLENGFPPYPDFLKIFNSHEDSQLLVIPRSYNRYYPNPLPQTAVLKNPEGRFWNVQWTKSQEVIISLQEGWVKFVKDNGLIDRDFLLFTYDGSRSFWVRIHRNGLPLEPTAPIKIQEISDDEDETNGDGDPHMEEEGDTDENMIVSLSLGSSDEVGDDDDDDYDTAICDEVNKASGSSKKGRVTRKHRDDSLASITPQIFLADPNNPFFISTSSCSRRILVIARQVIKDYGLNFDGTVNLIDGFGELTRKVGKWKDRVVIYKWNEMFTRNKVKQGDVIICEIIREEDVVRSIKVHFVKN</sequence>
<feature type="chain" id="PRO_0000375160" description="B3 domain-containing protein At5g57720">
    <location>
        <begin position="1"/>
        <end position="300"/>
    </location>
</feature>
<feature type="DNA-binding region" description="TF-B3" evidence="1">
    <location>
        <begin position="11"/>
        <end position="105"/>
    </location>
</feature>
<feature type="region of interest" description="Disordered" evidence="2">
    <location>
        <begin position="115"/>
        <end position="142"/>
    </location>
</feature>
<feature type="compositionally biased region" description="Acidic residues" evidence="2">
    <location>
        <begin position="119"/>
        <end position="129"/>
    </location>
</feature>
<name>Y5772_ARATH</name>
<proteinExistence type="evidence at transcript level"/>
<evidence type="ECO:0000255" key="1">
    <source>
        <dbReference type="PROSITE-ProRule" id="PRU00326"/>
    </source>
</evidence>
<evidence type="ECO:0000256" key="2">
    <source>
        <dbReference type="SAM" id="MobiDB-lite"/>
    </source>
</evidence>
<gene>
    <name type="ordered locus">At5g57720</name>
    <name type="ORF">MRI1.8</name>
</gene>